<comment type="function">
    <text evidence="1">Catalyzes the hydrolysis of N-succinyl-L,L-diaminopimelic acid (SDAP), forming succinate and LL-2,6-diaminopimelate (DAP), an intermediate involved in the bacterial biosynthesis of lysine and meso-diaminopimelic acid, an essential component of bacterial cell walls.</text>
</comment>
<comment type="catalytic activity">
    <reaction evidence="1">
        <text>N-succinyl-(2S,6S)-2,6-diaminopimelate + H2O = (2S,6S)-2,6-diaminopimelate + succinate</text>
        <dbReference type="Rhea" id="RHEA:22608"/>
        <dbReference type="ChEBI" id="CHEBI:15377"/>
        <dbReference type="ChEBI" id="CHEBI:30031"/>
        <dbReference type="ChEBI" id="CHEBI:57609"/>
        <dbReference type="ChEBI" id="CHEBI:58087"/>
        <dbReference type="EC" id="3.5.1.18"/>
    </reaction>
</comment>
<comment type="cofactor">
    <cofactor evidence="1">
        <name>Zn(2+)</name>
        <dbReference type="ChEBI" id="CHEBI:29105"/>
    </cofactor>
    <cofactor evidence="1">
        <name>Co(2+)</name>
        <dbReference type="ChEBI" id="CHEBI:48828"/>
    </cofactor>
    <text evidence="1">Binds 2 Zn(2+) or Co(2+) ions per subunit.</text>
</comment>
<comment type="pathway">
    <text evidence="1">Amino-acid biosynthesis; L-lysine biosynthesis via DAP pathway; LL-2,6-diaminopimelate from (S)-tetrahydrodipicolinate (succinylase route): step 3/3.</text>
</comment>
<comment type="subunit">
    <text evidence="1">Homodimer.</text>
</comment>
<comment type="similarity">
    <text evidence="1">Belongs to the peptidase M20A family. DapE subfamily.</text>
</comment>
<gene>
    <name evidence="1" type="primary">dapE</name>
    <name type="ordered locus">ACICU_03057</name>
</gene>
<keyword id="KW-0028">Amino-acid biosynthesis</keyword>
<keyword id="KW-0170">Cobalt</keyword>
<keyword id="KW-0220">Diaminopimelate biosynthesis</keyword>
<keyword id="KW-0378">Hydrolase</keyword>
<keyword id="KW-0457">Lysine biosynthesis</keyword>
<keyword id="KW-0479">Metal-binding</keyword>
<keyword id="KW-0862">Zinc</keyword>
<proteinExistence type="inferred from homology"/>
<feature type="chain" id="PRO_0000375444" description="Succinyl-diaminopimelate desuccinylase">
    <location>
        <begin position="1"/>
        <end position="378"/>
    </location>
</feature>
<feature type="active site" evidence="1">
    <location>
        <position position="70"/>
    </location>
</feature>
<feature type="active site" description="Proton acceptor" evidence="1">
    <location>
        <position position="135"/>
    </location>
</feature>
<feature type="binding site" evidence="1">
    <location>
        <position position="68"/>
    </location>
    <ligand>
        <name>Zn(2+)</name>
        <dbReference type="ChEBI" id="CHEBI:29105"/>
        <label>1</label>
    </ligand>
</feature>
<feature type="binding site" evidence="1">
    <location>
        <position position="101"/>
    </location>
    <ligand>
        <name>Zn(2+)</name>
        <dbReference type="ChEBI" id="CHEBI:29105"/>
        <label>1</label>
    </ligand>
</feature>
<feature type="binding site" evidence="1">
    <location>
        <position position="101"/>
    </location>
    <ligand>
        <name>Zn(2+)</name>
        <dbReference type="ChEBI" id="CHEBI:29105"/>
        <label>2</label>
    </ligand>
</feature>
<feature type="binding site" evidence="1">
    <location>
        <position position="136"/>
    </location>
    <ligand>
        <name>Zn(2+)</name>
        <dbReference type="ChEBI" id="CHEBI:29105"/>
        <label>2</label>
    </ligand>
</feature>
<feature type="binding site" evidence="1">
    <location>
        <position position="164"/>
    </location>
    <ligand>
        <name>Zn(2+)</name>
        <dbReference type="ChEBI" id="CHEBI:29105"/>
        <label>1</label>
    </ligand>
</feature>
<feature type="binding site" evidence="1">
    <location>
        <position position="350"/>
    </location>
    <ligand>
        <name>Zn(2+)</name>
        <dbReference type="ChEBI" id="CHEBI:29105"/>
        <label>2</label>
    </ligand>
</feature>
<evidence type="ECO:0000255" key="1">
    <source>
        <dbReference type="HAMAP-Rule" id="MF_01690"/>
    </source>
</evidence>
<name>DAPE_ACIBC</name>
<organism>
    <name type="scientific">Acinetobacter baumannii (strain ACICU)</name>
    <dbReference type="NCBI Taxonomy" id="405416"/>
    <lineage>
        <taxon>Bacteria</taxon>
        <taxon>Pseudomonadati</taxon>
        <taxon>Pseudomonadota</taxon>
        <taxon>Gammaproteobacteria</taxon>
        <taxon>Moraxellales</taxon>
        <taxon>Moraxellaceae</taxon>
        <taxon>Acinetobacter</taxon>
        <taxon>Acinetobacter calcoaceticus/baumannii complex</taxon>
    </lineage>
</organism>
<reference key="1">
    <citation type="journal article" date="2008" name="Antimicrob. Agents Chemother.">
        <title>Whole-genome pyrosequencing of an epidemic multidrug-resistant Acinetobacter baumannii strain belonging to the European clone II group.</title>
        <authorList>
            <person name="Iacono M."/>
            <person name="Villa L."/>
            <person name="Fortini D."/>
            <person name="Bordoni R."/>
            <person name="Imperi F."/>
            <person name="Bonnal R.J."/>
            <person name="Sicheritz-Ponten T."/>
            <person name="De Bellis G."/>
            <person name="Visca P."/>
            <person name="Cassone A."/>
            <person name="Carattoli A."/>
        </authorList>
    </citation>
    <scope>NUCLEOTIDE SEQUENCE [LARGE SCALE GENOMIC DNA]</scope>
    <source>
        <strain>ACICU</strain>
    </source>
</reference>
<sequence length="378" mass="41199">MNHSDTLSLSLELLQQPSVTPIDHTCQTIIAERLAKVGFHIEPMRFGDVDNLWARRGTEGPVFCFAGHTDVVPTGRLDAWNSDPFAPEIRDGKLYGRGSADMKTALAAMVVASERFIAKHPNHKGSIAFLITSDEEGPAVNGTVKVIETLEKRNEKITWCLVGEPSSTHKLGDIVKNGRRGSLNAVLKVQGKQGHVAYPHLARNPIHEASPALAELCQTVWDNGNEYFPATSFQISNIHAGTGATNVIPGALEVTFNFRYSTEVTAEQLKQRVHEILDKHGLQYEIVWNLSGLPFLTPVGELVNAAQTAILNVTGTETELSTSGGTSDGRFIAPTGAQVLELGVLNATIHQINEHVDVHDLDPLTDIYEQILENLLAQ</sequence>
<dbReference type="EC" id="3.5.1.18" evidence="1"/>
<dbReference type="EMBL" id="CP000863">
    <property type="protein sequence ID" value="ACC58369.1"/>
    <property type="molecule type" value="Genomic_DNA"/>
</dbReference>
<dbReference type="RefSeq" id="WP_001016571.1">
    <property type="nucleotide sequence ID" value="NZ_CP031380.1"/>
</dbReference>
<dbReference type="SMR" id="B2HY23"/>
<dbReference type="KEGG" id="abc:ACICU_03057"/>
<dbReference type="HOGENOM" id="CLU_021802_4_0_6"/>
<dbReference type="UniPathway" id="UPA00034">
    <property type="reaction ID" value="UER00021"/>
</dbReference>
<dbReference type="Proteomes" id="UP000008839">
    <property type="component" value="Chromosome"/>
</dbReference>
<dbReference type="GO" id="GO:0008777">
    <property type="term" value="F:acetylornithine deacetylase activity"/>
    <property type="evidence" value="ECO:0007669"/>
    <property type="project" value="TreeGrafter"/>
</dbReference>
<dbReference type="GO" id="GO:0050897">
    <property type="term" value="F:cobalt ion binding"/>
    <property type="evidence" value="ECO:0007669"/>
    <property type="project" value="UniProtKB-UniRule"/>
</dbReference>
<dbReference type="GO" id="GO:0009014">
    <property type="term" value="F:succinyl-diaminopimelate desuccinylase activity"/>
    <property type="evidence" value="ECO:0007669"/>
    <property type="project" value="UniProtKB-UniRule"/>
</dbReference>
<dbReference type="GO" id="GO:0008270">
    <property type="term" value="F:zinc ion binding"/>
    <property type="evidence" value="ECO:0007669"/>
    <property type="project" value="UniProtKB-UniRule"/>
</dbReference>
<dbReference type="GO" id="GO:0019877">
    <property type="term" value="P:diaminopimelate biosynthetic process"/>
    <property type="evidence" value="ECO:0007669"/>
    <property type="project" value="UniProtKB-UniRule"/>
</dbReference>
<dbReference type="GO" id="GO:0006526">
    <property type="term" value="P:L-arginine biosynthetic process"/>
    <property type="evidence" value="ECO:0007669"/>
    <property type="project" value="TreeGrafter"/>
</dbReference>
<dbReference type="GO" id="GO:0009089">
    <property type="term" value="P:lysine biosynthetic process via diaminopimelate"/>
    <property type="evidence" value="ECO:0007669"/>
    <property type="project" value="UniProtKB-UniRule"/>
</dbReference>
<dbReference type="CDD" id="cd03891">
    <property type="entry name" value="M20_DapE_proteobac"/>
    <property type="match status" value="1"/>
</dbReference>
<dbReference type="FunFam" id="3.30.70.360:FF:000011">
    <property type="entry name" value="Succinyl-diaminopimelate desuccinylase"/>
    <property type="match status" value="1"/>
</dbReference>
<dbReference type="FunFam" id="3.40.630.10:FF:000005">
    <property type="entry name" value="Succinyl-diaminopimelate desuccinylase"/>
    <property type="match status" value="1"/>
</dbReference>
<dbReference type="Gene3D" id="3.40.630.10">
    <property type="entry name" value="Zn peptidases"/>
    <property type="match status" value="2"/>
</dbReference>
<dbReference type="HAMAP" id="MF_01690">
    <property type="entry name" value="DapE"/>
    <property type="match status" value="1"/>
</dbReference>
<dbReference type="InterPro" id="IPR036264">
    <property type="entry name" value="Bact_exopeptidase_dim_dom"/>
</dbReference>
<dbReference type="InterPro" id="IPR005941">
    <property type="entry name" value="DapE_proteobac"/>
</dbReference>
<dbReference type="InterPro" id="IPR002933">
    <property type="entry name" value="Peptidase_M20"/>
</dbReference>
<dbReference type="InterPro" id="IPR011650">
    <property type="entry name" value="Peptidase_M20_dimer"/>
</dbReference>
<dbReference type="InterPro" id="IPR050072">
    <property type="entry name" value="Peptidase_M20A"/>
</dbReference>
<dbReference type="NCBIfam" id="TIGR01246">
    <property type="entry name" value="dapE_proteo"/>
    <property type="match status" value="1"/>
</dbReference>
<dbReference type="NCBIfam" id="NF009557">
    <property type="entry name" value="PRK13009.1"/>
    <property type="match status" value="1"/>
</dbReference>
<dbReference type="PANTHER" id="PTHR43808">
    <property type="entry name" value="ACETYLORNITHINE DEACETYLASE"/>
    <property type="match status" value="1"/>
</dbReference>
<dbReference type="PANTHER" id="PTHR43808:SF31">
    <property type="entry name" value="N-ACETYL-L-CITRULLINE DEACETYLASE"/>
    <property type="match status" value="1"/>
</dbReference>
<dbReference type="Pfam" id="PF07687">
    <property type="entry name" value="M20_dimer"/>
    <property type="match status" value="1"/>
</dbReference>
<dbReference type="Pfam" id="PF01546">
    <property type="entry name" value="Peptidase_M20"/>
    <property type="match status" value="1"/>
</dbReference>
<dbReference type="SUPFAM" id="SSF55031">
    <property type="entry name" value="Bacterial exopeptidase dimerisation domain"/>
    <property type="match status" value="1"/>
</dbReference>
<dbReference type="SUPFAM" id="SSF53187">
    <property type="entry name" value="Zn-dependent exopeptidases"/>
    <property type="match status" value="1"/>
</dbReference>
<protein>
    <recommendedName>
        <fullName evidence="1">Succinyl-diaminopimelate desuccinylase</fullName>
        <shortName evidence="1">SDAP desuccinylase</shortName>
        <ecNumber evidence="1">3.5.1.18</ecNumber>
    </recommendedName>
    <alternativeName>
        <fullName evidence="1">N-succinyl-LL-2,6-diaminoheptanedioate amidohydrolase</fullName>
    </alternativeName>
</protein>
<accession>B2HY23</accession>